<sequence length="903" mass="101593">MENPQKAGPLLRDLTRAFSHYNKHNLLLKKNLKETIAFFREIRQNHSNTCSTSGPELDSGQLRCISFPRHDEDHLQKVVGCAPYILILGQDCSARYQLLNCMLGERLLPLGSDAGGACGVEGGACRRRKLCFTHGRQTRLSLALPGQYELVHQLAAHCGRWDTVPREDLEIQECEDPAQRLAELEITLHHALLQEAKIMVLPCRNVQPVEEALEDCRRGILPIILYAVSKATLSADQLSELQKVRETLPYPVCFVRIPTEPAPDPPGQRSALFAQLVSQELIGGAAGNCACGAPAQTPGKMQGILGEDLERLHRVLVPFARQVLQSQQVEATTLLNAVHCRCLDLFINQAFDMQRDLQITPRRLEYTREKEGELYSSLMAIANRKQEEMKEMIVETLESMKEQLLEDAANLEFTDIIMTSNSEPMSSKDIKVCISQIQDLIVIRLNQAVANKLTSSVDYLRESFVGTLERCLCSLEKSTGEPCAHNVTSNHLKQILNAAYHVEVTFHSGSSVTRLFWEQIKQIIHRISWVNPPSVTSEWKRKVAQDAIESLSAAKLAKSICSQFRTRLNSSHEAFASSLRQLEEGHTGRLERTEDLWLRVRKDHAPRLARLSLESRSLRDILLHGKPKLGRELGRGQYGVVYLCDNWAGRHPCALKSVVPPDDKHWNDLALEFHYTRSLPKHERLVNLHGSVIDHSYGGGSSIAVLLIMERLHRDLYTGLKAGLVLKERLQIALDVVEGIRFLHGQGLLHRDIKLKNVLLDKQNRAKITDLGFCKPEAMMSGSIVGTPIHMAPELFTGKYDNSVDVYAFGILFWYLCTGSVKLPEAFERCSSKDQLWTNVKKGSRPERLASFDEECWQLMEACWNGDPSQRPLLGIVQPSLQSIMDRLCNDSDQKSGNLEDSN</sequence>
<gene>
    <name evidence="4" type="primary">dstyk</name>
    <name evidence="4" type="synonym">ripk5</name>
</gene>
<keyword id="KW-0067">ATP-binding</keyword>
<keyword id="KW-0965">Cell junction</keyword>
<keyword id="KW-1003">Cell membrane</keyword>
<keyword id="KW-0175">Coiled coil</keyword>
<keyword id="KW-0963">Cytoplasm</keyword>
<keyword id="KW-0217">Developmental protein</keyword>
<keyword id="KW-0418">Kinase</keyword>
<keyword id="KW-0472">Membrane</keyword>
<keyword id="KW-0547">Nucleotide-binding</keyword>
<keyword id="KW-0723">Serine/threonine-protein kinase</keyword>
<keyword id="KW-0808">Transferase</keyword>
<keyword id="KW-0829">Tyrosine-protein kinase</keyword>
<accession>A2CI34</accession>
<organism>
    <name type="scientific">Pimephales promelas</name>
    <name type="common">Fathead minnow</name>
    <dbReference type="NCBI Taxonomy" id="90988"/>
    <lineage>
        <taxon>Eukaryota</taxon>
        <taxon>Metazoa</taxon>
        <taxon>Chordata</taxon>
        <taxon>Craniata</taxon>
        <taxon>Vertebrata</taxon>
        <taxon>Euteleostomi</taxon>
        <taxon>Actinopterygii</taxon>
        <taxon>Neopterygii</taxon>
        <taxon>Teleostei</taxon>
        <taxon>Ostariophysi</taxon>
        <taxon>Cypriniformes</taxon>
        <taxon>Leuciscidae</taxon>
        <taxon>Pogonichthyinae</taxon>
        <taxon>Pimephales</taxon>
    </lineage>
</organism>
<name>DUSTY_PIMPR</name>
<dbReference type="EC" id="2.7.12.1" evidence="1"/>
<dbReference type="EMBL" id="DQ419945">
    <property type="protein sequence ID" value="ABD77593.1"/>
    <property type="molecule type" value="mRNA"/>
</dbReference>
<dbReference type="SMR" id="A2CI34"/>
<dbReference type="GO" id="GO:0070161">
    <property type="term" value="C:anchoring junction"/>
    <property type="evidence" value="ECO:0007669"/>
    <property type="project" value="UniProtKB-SubCell"/>
</dbReference>
<dbReference type="GO" id="GO:0016324">
    <property type="term" value="C:apical plasma membrane"/>
    <property type="evidence" value="ECO:0000250"/>
    <property type="project" value="UniProtKB"/>
</dbReference>
<dbReference type="GO" id="GO:0016323">
    <property type="term" value="C:basolateral plasma membrane"/>
    <property type="evidence" value="ECO:0000250"/>
    <property type="project" value="UniProtKB"/>
</dbReference>
<dbReference type="GO" id="GO:0005737">
    <property type="term" value="C:cytoplasm"/>
    <property type="evidence" value="ECO:0000250"/>
    <property type="project" value="UniProtKB"/>
</dbReference>
<dbReference type="GO" id="GO:0005524">
    <property type="term" value="F:ATP binding"/>
    <property type="evidence" value="ECO:0007669"/>
    <property type="project" value="UniProtKB-KW"/>
</dbReference>
<dbReference type="GO" id="GO:0106310">
    <property type="term" value="F:protein serine kinase activity"/>
    <property type="evidence" value="ECO:0007669"/>
    <property type="project" value="RHEA"/>
</dbReference>
<dbReference type="GO" id="GO:0004674">
    <property type="term" value="F:protein serine/threonine kinase activity"/>
    <property type="evidence" value="ECO:0007669"/>
    <property type="project" value="UniProtKB-KW"/>
</dbReference>
<dbReference type="GO" id="GO:0004712">
    <property type="term" value="F:protein serine/threonine/tyrosine kinase activity"/>
    <property type="evidence" value="ECO:0007669"/>
    <property type="project" value="UniProtKB-EC"/>
</dbReference>
<dbReference type="GO" id="GO:0004713">
    <property type="term" value="F:protein tyrosine kinase activity"/>
    <property type="evidence" value="ECO:0007669"/>
    <property type="project" value="UniProtKB-KW"/>
</dbReference>
<dbReference type="GO" id="GO:0044344">
    <property type="term" value="P:cellular response to fibroblast growth factor stimulus"/>
    <property type="evidence" value="ECO:0007669"/>
    <property type="project" value="TreeGrafter"/>
</dbReference>
<dbReference type="GO" id="GO:0048568">
    <property type="term" value="P:embryonic organ development"/>
    <property type="evidence" value="ECO:0000250"/>
    <property type="project" value="UniProtKB"/>
</dbReference>
<dbReference type="GO" id="GO:0043066">
    <property type="term" value="P:negative regulation of apoptotic process"/>
    <property type="evidence" value="ECO:0007669"/>
    <property type="project" value="TreeGrafter"/>
</dbReference>
<dbReference type="GO" id="GO:0070374">
    <property type="term" value="P:positive regulation of ERK1 and ERK2 cascade"/>
    <property type="evidence" value="ECO:0007669"/>
    <property type="project" value="TreeGrafter"/>
</dbReference>
<dbReference type="GO" id="GO:0045743">
    <property type="term" value="P:positive regulation of fibroblast growth factor receptor signaling pathway"/>
    <property type="evidence" value="ECO:0007669"/>
    <property type="project" value="TreeGrafter"/>
</dbReference>
<dbReference type="CDD" id="cd13975">
    <property type="entry name" value="PKc_Dusty"/>
    <property type="match status" value="1"/>
</dbReference>
<dbReference type="FunFam" id="1.10.510.10:FF:000244">
    <property type="entry name" value="Dual serine/threonine and tyrosine protein kinase"/>
    <property type="match status" value="1"/>
</dbReference>
<dbReference type="Gene3D" id="1.10.510.10">
    <property type="entry name" value="Transferase(Phosphotransferase) domain 1"/>
    <property type="match status" value="1"/>
</dbReference>
<dbReference type="InterPro" id="IPR051302">
    <property type="entry name" value="Dual_SerThr-Tyr_Kinase"/>
</dbReference>
<dbReference type="InterPro" id="IPR011009">
    <property type="entry name" value="Kinase-like_dom_sf"/>
</dbReference>
<dbReference type="InterPro" id="IPR000719">
    <property type="entry name" value="Prot_kinase_dom"/>
</dbReference>
<dbReference type="InterPro" id="IPR017441">
    <property type="entry name" value="Protein_kinase_ATP_BS"/>
</dbReference>
<dbReference type="InterPro" id="IPR008271">
    <property type="entry name" value="Ser/Thr_kinase_AS"/>
</dbReference>
<dbReference type="PANTHER" id="PTHR46392">
    <property type="entry name" value="DUAL SERINE/THREONINE AND TYROSINE PROTEIN KINASE"/>
    <property type="match status" value="1"/>
</dbReference>
<dbReference type="PANTHER" id="PTHR46392:SF1">
    <property type="entry name" value="DUAL SERINE_THREONINE AND TYROSINE PROTEIN KINASE"/>
    <property type="match status" value="1"/>
</dbReference>
<dbReference type="Pfam" id="PF00069">
    <property type="entry name" value="Pkinase"/>
    <property type="match status" value="1"/>
</dbReference>
<dbReference type="SMART" id="SM00220">
    <property type="entry name" value="S_TKc"/>
    <property type="match status" value="1"/>
</dbReference>
<dbReference type="SUPFAM" id="SSF56112">
    <property type="entry name" value="Protein kinase-like (PK-like)"/>
    <property type="match status" value="1"/>
</dbReference>
<dbReference type="PROSITE" id="PS00107">
    <property type="entry name" value="PROTEIN_KINASE_ATP"/>
    <property type="match status" value="1"/>
</dbReference>
<dbReference type="PROSITE" id="PS50011">
    <property type="entry name" value="PROTEIN_KINASE_DOM"/>
    <property type="match status" value="1"/>
</dbReference>
<dbReference type="PROSITE" id="PS00108">
    <property type="entry name" value="PROTEIN_KINASE_ST"/>
    <property type="match status" value="1"/>
</dbReference>
<feature type="chain" id="PRO_0000374057" description="Dual serine/threonine and tyrosine protein kinase">
    <location>
        <begin position="1"/>
        <end position="903"/>
    </location>
</feature>
<feature type="domain" description="Protein kinase" evidence="6">
    <location>
        <begin position="627"/>
        <end position="881"/>
    </location>
</feature>
<feature type="coiled-coil region" evidence="5">
    <location>
        <begin position="382"/>
        <end position="414"/>
    </location>
</feature>
<feature type="active site" description="Proton acceptor" evidence="4 6 7">
    <location>
        <position position="752"/>
    </location>
</feature>
<feature type="binding site" evidence="4 6">
    <location>
        <begin position="633"/>
        <end position="641"/>
    </location>
    <ligand>
        <name>ATP</name>
        <dbReference type="ChEBI" id="CHEBI:30616"/>
    </ligand>
</feature>
<feature type="binding site" evidence="4 6">
    <location>
        <position position="656"/>
    </location>
    <ligand>
        <name>ATP</name>
        <dbReference type="ChEBI" id="CHEBI:30616"/>
    </ligand>
</feature>
<evidence type="ECO:0000250" key="1">
    <source>
        <dbReference type="UniProtKB" id="P16879"/>
    </source>
</evidence>
<evidence type="ECO:0000250" key="2">
    <source>
        <dbReference type="UniProtKB" id="Q4VSN1"/>
    </source>
</evidence>
<evidence type="ECO:0000250" key="3">
    <source>
        <dbReference type="UniProtKB" id="Q6XUX1"/>
    </source>
</evidence>
<evidence type="ECO:0000250" key="4">
    <source>
        <dbReference type="UniProtKB" id="Q6XUX3"/>
    </source>
</evidence>
<evidence type="ECO:0000255" key="5"/>
<evidence type="ECO:0000255" key="6">
    <source>
        <dbReference type="PROSITE-ProRule" id="PRU00159"/>
    </source>
</evidence>
<evidence type="ECO:0000255" key="7">
    <source>
        <dbReference type="PROSITE-ProRule" id="PRU10027"/>
    </source>
</evidence>
<evidence type="ECO:0000303" key="8">
    <source>
    </source>
</evidence>
<evidence type="ECO:0000312" key="9">
    <source>
        <dbReference type="EMBL" id="ABD77593.1"/>
    </source>
</evidence>
<proteinExistence type="evidence at transcript level"/>
<reference evidence="9" key="1">
    <citation type="journal article" date="2006" name="Biochim. Biophys. Acta">
        <title>Dusty protein kinases: primary structure, gene evolution, tissue specific expression and unique features of the catalytic domain.</title>
        <authorList>
            <person name="Peng J."/>
            <person name="Dong W."/>
            <person name="Chen Y."/>
            <person name="Mo R."/>
            <person name="Cheng J.-F."/>
            <person name="Hui C.-C."/>
            <person name="Mohandas N."/>
            <person name="Huang C.-H."/>
        </authorList>
    </citation>
    <scope>NUCLEOTIDE SEQUENCE [MRNA]</scope>
</reference>
<comment type="function">
    <text evidence="2 4">May act as a positive regulator of ERK phosphorylation downstream of fibroblast growth factor-receptor activation. May induce both caspase-dependent apoptosis and caspase-independent cell death. May play a role in the embryonic development.</text>
</comment>
<comment type="catalytic activity">
    <reaction evidence="1">
        <text>L-seryl-[protein] + ATP = O-phospho-L-seryl-[protein] + ADP + H(+)</text>
        <dbReference type="Rhea" id="RHEA:17989"/>
        <dbReference type="Rhea" id="RHEA-COMP:9863"/>
        <dbReference type="Rhea" id="RHEA-COMP:11604"/>
        <dbReference type="ChEBI" id="CHEBI:15378"/>
        <dbReference type="ChEBI" id="CHEBI:29999"/>
        <dbReference type="ChEBI" id="CHEBI:30616"/>
        <dbReference type="ChEBI" id="CHEBI:83421"/>
        <dbReference type="ChEBI" id="CHEBI:456216"/>
        <dbReference type="EC" id="2.7.12.1"/>
    </reaction>
</comment>
<comment type="catalytic activity">
    <reaction evidence="1">
        <text>L-threonyl-[protein] + ATP = O-phospho-L-threonyl-[protein] + ADP + H(+)</text>
        <dbReference type="Rhea" id="RHEA:46608"/>
        <dbReference type="Rhea" id="RHEA-COMP:11060"/>
        <dbReference type="Rhea" id="RHEA-COMP:11605"/>
        <dbReference type="ChEBI" id="CHEBI:15378"/>
        <dbReference type="ChEBI" id="CHEBI:30013"/>
        <dbReference type="ChEBI" id="CHEBI:30616"/>
        <dbReference type="ChEBI" id="CHEBI:61977"/>
        <dbReference type="ChEBI" id="CHEBI:456216"/>
        <dbReference type="EC" id="2.7.12.1"/>
    </reaction>
</comment>
<comment type="catalytic activity">
    <reaction evidence="1">
        <text>L-tyrosyl-[protein] + ATP = O-phospho-L-tyrosyl-[protein] + ADP + H(+)</text>
        <dbReference type="Rhea" id="RHEA:10596"/>
        <dbReference type="Rhea" id="RHEA-COMP:10136"/>
        <dbReference type="Rhea" id="RHEA-COMP:20101"/>
        <dbReference type="ChEBI" id="CHEBI:15378"/>
        <dbReference type="ChEBI" id="CHEBI:30616"/>
        <dbReference type="ChEBI" id="CHEBI:46858"/>
        <dbReference type="ChEBI" id="CHEBI:61978"/>
        <dbReference type="ChEBI" id="CHEBI:456216"/>
        <dbReference type="EC" id="2.7.12.1"/>
    </reaction>
</comment>
<comment type="subcellular location">
    <subcellularLocation>
        <location evidence="3">Cytoplasm</location>
    </subcellularLocation>
    <subcellularLocation>
        <location evidence="3">Cell membrane</location>
    </subcellularLocation>
    <subcellularLocation>
        <location evidence="3">Apical cell membrane</location>
    </subcellularLocation>
    <subcellularLocation>
        <location evidence="3">Basolateral cell membrane</location>
    </subcellularLocation>
    <subcellularLocation>
        <location evidence="3">Cell junction</location>
    </subcellularLocation>
</comment>
<comment type="similarity">
    <text evidence="6">Belongs to the protein kinase superfamily. Ser/Thr protein kinase family.</text>
</comment>
<protein>
    <recommendedName>
        <fullName evidence="8">Dual serine/threonine and tyrosine protein kinase</fullName>
        <ecNumber evidence="1">2.7.12.1</ecNumber>
    </recommendedName>
    <alternativeName>
        <fullName evidence="8 9">Dusty protein kinase</fullName>
        <shortName evidence="8">Dusty PK</shortName>
    </alternativeName>
    <alternativeName>
        <fullName evidence="4">Receptor-interacting serine/threonine-protein kinase 5</fullName>
    </alternativeName>
</protein>